<keyword id="KW-0997">Cell inner membrane</keyword>
<keyword id="KW-1003">Cell membrane</keyword>
<keyword id="KW-0472">Membrane</keyword>
<keyword id="KW-0762">Sugar transport</keyword>
<keyword id="KW-0812">Transmembrane</keyword>
<keyword id="KW-1133">Transmembrane helix</keyword>
<keyword id="KW-0813">Transport</keyword>
<dbReference type="EMBL" id="CP000802">
    <property type="protein sequence ID" value="ABV07638.1"/>
    <property type="molecule type" value="Genomic_DNA"/>
</dbReference>
<dbReference type="RefSeq" id="WP_000108463.1">
    <property type="nucleotide sequence ID" value="NC_009800.1"/>
</dbReference>
<dbReference type="SMR" id="A8A534"/>
<dbReference type="KEGG" id="ecx:EcHS_A3412"/>
<dbReference type="HOGENOM" id="CLU_001265_46_8_6"/>
<dbReference type="GO" id="GO:0005886">
    <property type="term" value="C:plasma membrane"/>
    <property type="evidence" value="ECO:0007669"/>
    <property type="project" value="UniProtKB-SubCell"/>
</dbReference>
<dbReference type="GO" id="GO:0046943">
    <property type="term" value="F:carboxylic acid transmembrane transporter activity"/>
    <property type="evidence" value="ECO:0007669"/>
    <property type="project" value="TreeGrafter"/>
</dbReference>
<dbReference type="GO" id="GO:0015538">
    <property type="term" value="F:sialic acid:proton symporter activity"/>
    <property type="evidence" value="ECO:0007669"/>
    <property type="project" value="UniProtKB-UniRule"/>
</dbReference>
<dbReference type="CDD" id="cd17316">
    <property type="entry name" value="MFS_SV2_like"/>
    <property type="match status" value="1"/>
</dbReference>
<dbReference type="FunFam" id="1.20.1250.20:FF:000027">
    <property type="entry name" value="Sialic acid transporter NanT"/>
    <property type="match status" value="1"/>
</dbReference>
<dbReference type="FunFam" id="1.20.1250.20:FF:000038">
    <property type="entry name" value="Sialic acid transporter NanT"/>
    <property type="match status" value="1"/>
</dbReference>
<dbReference type="Gene3D" id="1.20.1250.20">
    <property type="entry name" value="MFS general substrate transporter like domains"/>
    <property type="match status" value="2"/>
</dbReference>
<dbReference type="HAMAP" id="MF_01238">
    <property type="entry name" value="MFS_NanT"/>
    <property type="match status" value="1"/>
</dbReference>
<dbReference type="InterPro" id="IPR011701">
    <property type="entry name" value="MFS"/>
</dbReference>
<dbReference type="InterPro" id="IPR020846">
    <property type="entry name" value="MFS_dom"/>
</dbReference>
<dbReference type="InterPro" id="IPR036259">
    <property type="entry name" value="MFS_trans_sf"/>
</dbReference>
<dbReference type="InterPro" id="IPR004742">
    <property type="entry name" value="SA_transporter"/>
</dbReference>
<dbReference type="NCBIfam" id="TIGR00891">
    <property type="entry name" value="2A0112"/>
    <property type="match status" value="1"/>
</dbReference>
<dbReference type="NCBIfam" id="NF003024">
    <property type="entry name" value="PRK03893.1"/>
    <property type="match status" value="1"/>
</dbReference>
<dbReference type="PANTHER" id="PTHR23508">
    <property type="entry name" value="CARBOXYLIC ACID TRANSPORTER PROTEIN HOMOLOG"/>
    <property type="match status" value="1"/>
</dbReference>
<dbReference type="PANTHER" id="PTHR23508:SF3">
    <property type="entry name" value="SIALIC ACID TRANSPORTER NANT"/>
    <property type="match status" value="1"/>
</dbReference>
<dbReference type="Pfam" id="PF07690">
    <property type="entry name" value="MFS_1"/>
    <property type="match status" value="1"/>
</dbReference>
<dbReference type="SUPFAM" id="SSF103473">
    <property type="entry name" value="MFS general substrate transporter"/>
    <property type="match status" value="1"/>
</dbReference>
<dbReference type="PROSITE" id="PS50850">
    <property type="entry name" value="MFS"/>
    <property type="match status" value="1"/>
</dbReference>
<accession>A8A534</accession>
<organism>
    <name type="scientific">Escherichia coli O9:H4 (strain HS)</name>
    <dbReference type="NCBI Taxonomy" id="331112"/>
    <lineage>
        <taxon>Bacteria</taxon>
        <taxon>Pseudomonadati</taxon>
        <taxon>Pseudomonadota</taxon>
        <taxon>Gammaproteobacteria</taxon>
        <taxon>Enterobacterales</taxon>
        <taxon>Enterobacteriaceae</taxon>
        <taxon>Escherichia</taxon>
    </lineage>
</organism>
<gene>
    <name evidence="1" type="primary">nanT</name>
    <name type="ordered locus">EcHS_A3412</name>
</gene>
<proteinExistence type="inferred from homology"/>
<name>NANT_ECOHS</name>
<evidence type="ECO:0000255" key="1">
    <source>
        <dbReference type="HAMAP-Rule" id="MF_01238"/>
    </source>
</evidence>
<comment type="function">
    <text evidence="1">Catalyzes the proton-dependent transport of sialic acid.</text>
</comment>
<comment type="catalytic activity">
    <reaction evidence="1">
        <text>N-acetylneuraminate(in) + H(+)(in) = N-acetylneuraminate(out) + H(+)(out)</text>
        <dbReference type="Rhea" id="RHEA:28987"/>
        <dbReference type="ChEBI" id="CHEBI:15378"/>
        <dbReference type="ChEBI" id="CHEBI:35418"/>
    </reaction>
</comment>
<comment type="subcellular location">
    <subcellularLocation>
        <location evidence="1">Cell inner membrane</location>
        <topology evidence="1">Multi-pass membrane protein</topology>
    </subcellularLocation>
</comment>
<comment type="similarity">
    <text evidence="1">Belongs to the major facilitator superfamily. Sialate:H(+) symporter (SHS) (TC 2.A.1.12) family.</text>
</comment>
<reference key="1">
    <citation type="journal article" date="2008" name="J. Bacteriol.">
        <title>The pangenome structure of Escherichia coli: comparative genomic analysis of E. coli commensal and pathogenic isolates.</title>
        <authorList>
            <person name="Rasko D.A."/>
            <person name="Rosovitz M.J."/>
            <person name="Myers G.S.A."/>
            <person name="Mongodin E.F."/>
            <person name="Fricke W.F."/>
            <person name="Gajer P."/>
            <person name="Crabtree J."/>
            <person name="Sebaihia M."/>
            <person name="Thomson N.R."/>
            <person name="Chaudhuri R."/>
            <person name="Henderson I.R."/>
            <person name="Sperandio V."/>
            <person name="Ravel J."/>
        </authorList>
    </citation>
    <scope>NUCLEOTIDE SEQUENCE [LARGE SCALE GENOMIC DNA]</scope>
    <source>
        <strain>HS</strain>
    </source>
</reference>
<feature type="chain" id="PRO_1000214048" description="Sialic acid transporter NanT">
    <location>
        <begin position="1"/>
        <end position="496"/>
    </location>
</feature>
<feature type="transmembrane region" description="Helical" evidence="1">
    <location>
        <begin position="22"/>
        <end position="42"/>
    </location>
</feature>
<feature type="transmembrane region" description="Helical" evidence="1">
    <location>
        <begin position="58"/>
        <end position="78"/>
    </location>
</feature>
<feature type="transmembrane region" description="Helical" evidence="1">
    <location>
        <begin position="92"/>
        <end position="112"/>
    </location>
</feature>
<feature type="transmembrane region" description="Helical" evidence="1">
    <location>
        <begin position="116"/>
        <end position="136"/>
    </location>
</feature>
<feature type="transmembrane region" description="Helical" evidence="1">
    <location>
        <begin position="148"/>
        <end position="168"/>
    </location>
</feature>
<feature type="transmembrane region" description="Helical" evidence="1">
    <location>
        <begin position="170"/>
        <end position="190"/>
    </location>
</feature>
<feature type="transmembrane region" description="Helical" evidence="1">
    <location>
        <begin position="224"/>
        <end position="244"/>
    </location>
</feature>
<feature type="transmembrane region" description="Helical" evidence="1">
    <location>
        <begin position="247"/>
        <end position="267"/>
    </location>
</feature>
<feature type="transmembrane region" description="Helical" evidence="1">
    <location>
        <begin position="278"/>
        <end position="298"/>
    </location>
</feature>
<feature type="transmembrane region" description="Helical" evidence="1">
    <location>
        <begin position="313"/>
        <end position="333"/>
    </location>
</feature>
<feature type="transmembrane region" description="Helical" evidence="1">
    <location>
        <begin position="353"/>
        <end position="375"/>
    </location>
</feature>
<feature type="transmembrane region" description="Helical" evidence="1">
    <location>
        <begin position="406"/>
        <end position="426"/>
    </location>
</feature>
<feature type="transmembrane region" description="Helical" evidence="1">
    <location>
        <begin position="431"/>
        <end position="451"/>
    </location>
</feature>
<protein>
    <recommendedName>
        <fullName evidence="1">Sialic acid transporter NanT</fullName>
    </recommendedName>
    <alternativeName>
        <fullName evidence="1">Sialic acid permease</fullName>
    </alternativeName>
    <alternativeName>
        <fullName evidence="1">Sialic acid/H(+) symporter</fullName>
    </alternativeName>
</protein>
<sequence length="496" mass="53623">MSTTTQNIPWYRHLNRAQWRAFSAAWLGYLLDGFDFVLIALVLTEVQGEFGLTTVQAASLISAAFISRWFGGLMLGAMGDRYGRRLAMVTSIVLFSAGTLACGFAPGYITMFIARLVIGMGMAGEYGSSATYVIESWPKHLRNKASGFLISGFSVGAVVAAQVYSLVVPVWGWRALFFIGILPIIFALWLRKNIPEAEDWKEKHAGKAPVRTMVDILYRGEHRIANIVMTLAAATALWFCFAGNLQNAAIVAVLGLLCAAIFISFMVQSTGKRWPTGVMLMVVVLFAFLYSWPIQALLPTYLKTDLAYNPHTVANVLFFSGFGAAVGCCVGGFLGDWLGTRKAYVCSLLASQLLIIPVFAIGGANVWVLGLLLFFQQMLGQGIAGILPKLIGGYFDTDQRAAVLGFTYNVGALGGALAPIIGALIAQRLDLGTALASLSFSLTFVVILLIGLDMPSRVQRWLRPEALRTHDAIDGKPFSGAVPFGSAKNDLVKTKS</sequence>